<proteinExistence type="inferred from homology"/>
<name>CH60_SALDC</name>
<sequence>MAAKDVKFGNDARVKMLRGVNVLADAVKVTLGPKGRNVVLDKSFGAPTITKDGVSVAREIELEDKFENMGAQMVKEVASKANDAAGDGTTTATVLAQSIITEGLKAVAAGMNPMDLKRGIDKAVAAAVEELKALSVPCSDSKAIAQVGTISANSDETVGKLIAEAMDKVGKEGVITVEDGTGLQDELDVVEGMQFDRGYLSPYFINKPETGAVELESPFILLADKKISNIREMLPVLEAVAKAGKPLLIIAEDVEGEALATLVVNTMRGIVKVAAVKAPGFGDRRKAMLQDIATLTGGTVISEEIGMELEKATLEDLGQAKRVVINKDTTTIIDGVGEEAAIQGRVAQIRQQIEEATSDYDREKLQERVAKLAGGVAVIKVGAATEVEMKEKKARVEDALHATRAAVEEGVVAGGGVALIRVASKIADLKGQNEDQNVGIKVALRAMEAPLRQIVLNCGEEPSVVANTVKGGDGNYGYNAATEEYGNMIDMGILDPTKVTRSALQYAASVAGLMITTECMVTDLPKSDAPDLGAAGGMGGMGGMGGMM</sequence>
<gene>
    <name evidence="1" type="primary">groEL</name>
    <name evidence="1" type="synonym">groL</name>
    <name type="ordered locus">SeD_A4727</name>
</gene>
<accession>B5FRK2</accession>
<reference key="1">
    <citation type="journal article" date="2011" name="J. Bacteriol.">
        <title>Comparative genomics of 28 Salmonella enterica isolates: evidence for CRISPR-mediated adaptive sublineage evolution.</title>
        <authorList>
            <person name="Fricke W.F."/>
            <person name="Mammel M.K."/>
            <person name="McDermott P.F."/>
            <person name="Tartera C."/>
            <person name="White D.G."/>
            <person name="Leclerc J.E."/>
            <person name="Ravel J."/>
            <person name="Cebula T.A."/>
        </authorList>
    </citation>
    <scope>NUCLEOTIDE SEQUENCE [LARGE SCALE GENOMIC DNA]</scope>
    <source>
        <strain>CT_02021853</strain>
    </source>
</reference>
<feature type="chain" id="PRO_1000130052" description="Chaperonin GroEL">
    <location>
        <begin position="1"/>
        <end position="548"/>
    </location>
</feature>
<feature type="binding site" evidence="1">
    <location>
        <begin position="30"/>
        <end position="33"/>
    </location>
    <ligand>
        <name>ATP</name>
        <dbReference type="ChEBI" id="CHEBI:30616"/>
    </ligand>
</feature>
<feature type="binding site" evidence="1">
    <location>
        <position position="51"/>
    </location>
    <ligand>
        <name>ATP</name>
        <dbReference type="ChEBI" id="CHEBI:30616"/>
    </ligand>
</feature>
<feature type="binding site" evidence="1">
    <location>
        <begin position="87"/>
        <end position="91"/>
    </location>
    <ligand>
        <name>ATP</name>
        <dbReference type="ChEBI" id="CHEBI:30616"/>
    </ligand>
</feature>
<feature type="binding site" evidence="1">
    <location>
        <position position="415"/>
    </location>
    <ligand>
        <name>ATP</name>
        <dbReference type="ChEBI" id="CHEBI:30616"/>
    </ligand>
</feature>
<feature type="binding site" evidence="1">
    <location>
        <begin position="479"/>
        <end position="481"/>
    </location>
    <ligand>
        <name>ATP</name>
        <dbReference type="ChEBI" id="CHEBI:30616"/>
    </ligand>
</feature>
<feature type="binding site" evidence="1">
    <location>
        <position position="495"/>
    </location>
    <ligand>
        <name>ATP</name>
        <dbReference type="ChEBI" id="CHEBI:30616"/>
    </ligand>
</feature>
<comment type="function">
    <text evidence="1">Together with its co-chaperonin GroES, plays an essential role in assisting protein folding. The GroEL-GroES system forms a nano-cage that allows encapsulation of the non-native substrate proteins and provides a physical environment optimized to promote and accelerate protein folding.</text>
</comment>
<comment type="catalytic activity">
    <reaction evidence="1">
        <text>ATP + H2O + a folded polypeptide = ADP + phosphate + an unfolded polypeptide.</text>
        <dbReference type="EC" id="5.6.1.7"/>
    </reaction>
</comment>
<comment type="subunit">
    <text evidence="1">Forms a cylinder of 14 subunits composed of two heptameric rings stacked back-to-back. Interacts with the co-chaperonin GroES.</text>
</comment>
<comment type="subcellular location">
    <subcellularLocation>
        <location evidence="1">Cytoplasm</location>
    </subcellularLocation>
</comment>
<comment type="similarity">
    <text evidence="1">Belongs to the chaperonin (HSP60) family.</text>
</comment>
<dbReference type="EC" id="5.6.1.7" evidence="1"/>
<dbReference type="EMBL" id="CP001144">
    <property type="protein sequence ID" value="ACH77482.1"/>
    <property type="molecule type" value="Genomic_DNA"/>
</dbReference>
<dbReference type="RefSeq" id="WP_000729126.1">
    <property type="nucleotide sequence ID" value="NC_011205.1"/>
</dbReference>
<dbReference type="SMR" id="B5FRK2"/>
<dbReference type="KEGG" id="sed:SeD_A4727"/>
<dbReference type="HOGENOM" id="CLU_016503_3_0_6"/>
<dbReference type="Proteomes" id="UP000008322">
    <property type="component" value="Chromosome"/>
</dbReference>
<dbReference type="GO" id="GO:0005737">
    <property type="term" value="C:cytoplasm"/>
    <property type="evidence" value="ECO:0007669"/>
    <property type="project" value="UniProtKB-SubCell"/>
</dbReference>
<dbReference type="GO" id="GO:0005524">
    <property type="term" value="F:ATP binding"/>
    <property type="evidence" value="ECO:0007669"/>
    <property type="project" value="UniProtKB-UniRule"/>
</dbReference>
<dbReference type="GO" id="GO:0140662">
    <property type="term" value="F:ATP-dependent protein folding chaperone"/>
    <property type="evidence" value="ECO:0007669"/>
    <property type="project" value="InterPro"/>
</dbReference>
<dbReference type="GO" id="GO:0016853">
    <property type="term" value="F:isomerase activity"/>
    <property type="evidence" value="ECO:0007669"/>
    <property type="project" value="UniProtKB-KW"/>
</dbReference>
<dbReference type="GO" id="GO:0051082">
    <property type="term" value="F:unfolded protein binding"/>
    <property type="evidence" value="ECO:0007669"/>
    <property type="project" value="UniProtKB-UniRule"/>
</dbReference>
<dbReference type="GO" id="GO:0042026">
    <property type="term" value="P:protein refolding"/>
    <property type="evidence" value="ECO:0007669"/>
    <property type="project" value="UniProtKB-UniRule"/>
</dbReference>
<dbReference type="CDD" id="cd03344">
    <property type="entry name" value="GroEL"/>
    <property type="match status" value="1"/>
</dbReference>
<dbReference type="FunFam" id="1.10.560.10:FF:000001">
    <property type="entry name" value="60 kDa chaperonin"/>
    <property type="match status" value="1"/>
</dbReference>
<dbReference type="FunFam" id="3.50.7.10:FF:000001">
    <property type="entry name" value="60 kDa chaperonin"/>
    <property type="match status" value="1"/>
</dbReference>
<dbReference type="Gene3D" id="3.50.7.10">
    <property type="entry name" value="GroEL"/>
    <property type="match status" value="1"/>
</dbReference>
<dbReference type="Gene3D" id="1.10.560.10">
    <property type="entry name" value="GroEL-like equatorial domain"/>
    <property type="match status" value="1"/>
</dbReference>
<dbReference type="Gene3D" id="3.30.260.10">
    <property type="entry name" value="TCP-1-like chaperonin intermediate domain"/>
    <property type="match status" value="1"/>
</dbReference>
<dbReference type="HAMAP" id="MF_00600">
    <property type="entry name" value="CH60"/>
    <property type="match status" value="1"/>
</dbReference>
<dbReference type="InterPro" id="IPR018370">
    <property type="entry name" value="Chaperonin_Cpn60_CS"/>
</dbReference>
<dbReference type="InterPro" id="IPR001844">
    <property type="entry name" value="Cpn60/GroEL"/>
</dbReference>
<dbReference type="InterPro" id="IPR002423">
    <property type="entry name" value="Cpn60/GroEL/TCP-1"/>
</dbReference>
<dbReference type="InterPro" id="IPR027409">
    <property type="entry name" value="GroEL-like_apical_dom_sf"/>
</dbReference>
<dbReference type="InterPro" id="IPR027413">
    <property type="entry name" value="GROEL-like_equatorial_sf"/>
</dbReference>
<dbReference type="InterPro" id="IPR027410">
    <property type="entry name" value="TCP-1-like_intermed_sf"/>
</dbReference>
<dbReference type="NCBIfam" id="TIGR02348">
    <property type="entry name" value="GroEL"/>
    <property type="match status" value="1"/>
</dbReference>
<dbReference type="NCBIfam" id="NF000592">
    <property type="entry name" value="PRK00013.1"/>
    <property type="match status" value="1"/>
</dbReference>
<dbReference type="NCBIfam" id="NF009487">
    <property type="entry name" value="PRK12849.1"/>
    <property type="match status" value="1"/>
</dbReference>
<dbReference type="NCBIfam" id="NF009488">
    <property type="entry name" value="PRK12850.1"/>
    <property type="match status" value="1"/>
</dbReference>
<dbReference type="NCBIfam" id="NF009489">
    <property type="entry name" value="PRK12851.1"/>
    <property type="match status" value="1"/>
</dbReference>
<dbReference type="PANTHER" id="PTHR45633">
    <property type="entry name" value="60 KDA HEAT SHOCK PROTEIN, MITOCHONDRIAL"/>
    <property type="match status" value="1"/>
</dbReference>
<dbReference type="Pfam" id="PF00118">
    <property type="entry name" value="Cpn60_TCP1"/>
    <property type="match status" value="1"/>
</dbReference>
<dbReference type="PRINTS" id="PR00298">
    <property type="entry name" value="CHAPERONIN60"/>
</dbReference>
<dbReference type="SUPFAM" id="SSF52029">
    <property type="entry name" value="GroEL apical domain-like"/>
    <property type="match status" value="1"/>
</dbReference>
<dbReference type="SUPFAM" id="SSF48592">
    <property type="entry name" value="GroEL equatorial domain-like"/>
    <property type="match status" value="1"/>
</dbReference>
<dbReference type="SUPFAM" id="SSF54849">
    <property type="entry name" value="GroEL-intermediate domain like"/>
    <property type="match status" value="1"/>
</dbReference>
<dbReference type="PROSITE" id="PS00296">
    <property type="entry name" value="CHAPERONINS_CPN60"/>
    <property type="match status" value="1"/>
</dbReference>
<organism>
    <name type="scientific">Salmonella dublin (strain CT_02021853)</name>
    <dbReference type="NCBI Taxonomy" id="439851"/>
    <lineage>
        <taxon>Bacteria</taxon>
        <taxon>Pseudomonadati</taxon>
        <taxon>Pseudomonadota</taxon>
        <taxon>Gammaproteobacteria</taxon>
        <taxon>Enterobacterales</taxon>
        <taxon>Enterobacteriaceae</taxon>
        <taxon>Salmonella</taxon>
    </lineage>
</organism>
<keyword id="KW-0067">ATP-binding</keyword>
<keyword id="KW-0143">Chaperone</keyword>
<keyword id="KW-0963">Cytoplasm</keyword>
<keyword id="KW-0413">Isomerase</keyword>
<keyword id="KW-0547">Nucleotide-binding</keyword>
<evidence type="ECO:0000255" key="1">
    <source>
        <dbReference type="HAMAP-Rule" id="MF_00600"/>
    </source>
</evidence>
<protein>
    <recommendedName>
        <fullName evidence="1">Chaperonin GroEL</fullName>
        <ecNumber evidence="1">5.6.1.7</ecNumber>
    </recommendedName>
    <alternativeName>
        <fullName evidence="1">60 kDa chaperonin</fullName>
    </alternativeName>
    <alternativeName>
        <fullName evidence="1">Chaperonin-60</fullName>
        <shortName evidence="1">Cpn60</shortName>
    </alternativeName>
</protein>